<organism>
    <name type="scientific">Psychromonas ingrahamii (strain DSM 17664 / CCUG 51855 / 37)</name>
    <dbReference type="NCBI Taxonomy" id="357804"/>
    <lineage>
        <taxon>Bacteria</taxon>
        <taxon>Pseudomonadati</taxon>
        <taxon>Pseudomonadota</taxon>
        <taxon>Gammaproteobacteria</taxon>
        <taxon>Alteromonadales</taxon>
        <taxon>Psychromonadaceae</taxon>
        <taxon>Psychromonas</taxon>
    </lineage>
</organism>
<proteinExistence type="inferred from homology"/>
<evidence type="ECO:0000255" key="1">
    <source>
        <dbReference type="HAMAP-Rule" id="MF_00661"/>
    </source>
</evidence>
<comment type="function">
    <text evidence="1">DEAD-box RNA helicase involved in RNA degradation. Has RNA-dependent ATPase activity and unwinds double-stranded RNA.</text>
</comment>
<comment type="catalytic activity">
    <reaction evidence="1">
        <text>ATP + H2O = ADP + phosphate + H(+)</text>
        <dbReference type="Rhea" id="RHEA:13065"/>
        <dbReference type="ChEBI" id="CHEBI:15377"/>
        <dbReference type="ChEBI" id="CHEBI:15378"/>
        <dbReference type="ChEBI" id="CHEBI:30616"/>
        <dbReference type="ChEBI" id="CHEBI:43474"/>
        <dbReference type="ChEBI" id="CHEBI:456216"/>
        <dbReference type="EC" id="3.6.4.13"/>
    </reaction>
</comment>
<comment type="subunit">
    <text evidence="1">Component of the RNA degradosome, which is a multiprotein complex involved in RNA processing and mRNA degradation.</text>
</comment>
<comment type="subcellular location">
    <subcellularLocation>
        <location evidence="1">Cytoplasm</location>
    </subcellularLocation>
</comment>
<comment type="similarity">
    <text evidence="1">Belongs to the DEAD box helicase family. RhlB subfamily.</text>
</comment>
<reference key="1">
    <citation type="journal article" date="2008" name="BMC Genomics">
        <title>Genomics of an extreme psychrophile, Psychromonas ingrahamii.</title>
        <authorList>
            <person name="Riley M."/>
            <person name="Staley J.T."/>
            <person name="Danchin A."/>
            <person name="Wang T.Z."/>
            <person name="Brettin T.S."/>
            <person name="Hauser L.J."/>
            <person name="Land M.L."/>
            <person name="Thompson L.S."/>
        </authorList>
    </citation>
    <scope>NUCLEOTIDE SEQUENCE [LARGE SCALE GENOMIC DNA]</scope>
    <source>
        <strain>DSM 17664 / CCUG 51855 / 37</strain>
    </source>
</reference>
<keyword id="KW-0067">ATP-binding</keyword>
<keyword id="KW-0963">Cytoplasm</keyword>
<keyword id="KW-0347">Helicase</keyword>
<keyword id="KW-0378">Hydrolase</keyword>
<keyword id="KW-0547">Nucleotide-binding</keyword>
<keyword id="KW-1185">Reference proteome</keyword>
<keyword id="KW-0694">RNA-binding</keyword>
<feature type="chain" id="PRO_1000082851" description="ATP-dependent RNA helicase RhlB">
    <location>
        <begin position="1"/>
        <end position="418"/>
    </location>
</feature>
<feature type="domain" description="Helicase ATP-binding" evidence="1">
    <location>
        <begin position="40"/>
        <end position="219"/>
    </location>
</feature>
<feature type="domain" description="Helicase C-terminal" evidence="1">
    <location>
        <begin position="243"/>
        <end position="390"/>
    </location>
</feature>
<feature type="short sequence motif" description="Q motif">
    <location>
        <begin position="9"/>
        <end position="37"/>
    </location>
</feature>
<feature type="short sequence motif" description="DEAD box">
    <location>
        <begin position="165"/>
        <end position="168"/>
    </location>
</feature>
<feature type="binding site" evidence="1">
    <location>
        <begin position="53"/>
        <end position="60"/>
    </location>
    <ligand>
        <name>ATP</name>
        <dbReference type="ChEBI" id="CHEBI:30616"/>
    </ligand>
</feature>
<dbReference type="EC" id="3.6.4.13" evidence="1"/>
<dbReference type="EMBL" id="CP000510">
    <property type="protein sequence ID" value="ABM04879.1"/>
    <property type="molecule type" value="Genomic_DNA"/>
</dbReference>
<dbReference type="RefSeq" id="WP_011771433.1">
    <property type="nucleotide sequence ID" value="NC_008709.1"/>
</dbReference>
<dbReference type="SMR" id="A1SZG4"/>
<dbReference type="STRING" id="357804.Ping_3191"/>
<dbReference type="KEGG" id="pin:Ping_3191"/>
<dbReference type="eggNOG" id="COG0513">
    <property type="taxonomic scope" value="Bacteria"/>
</dbReference>
<dbReference type="HOGENOM" id="CLU_003041_28_3_6"/>
<dbReference type="OrthoDB" id="8520957at2"/>
<dbReference type="Proteomes" id="UP000000639">
    <property type="component" value="Chromosome"/>
</dbReference>
<dbReference type="GO" id="GO:0005829">
    <property type="term" value="C:cytosol"/>
    <property type="evidence" value="ECO:0007669"/>
    <property type="project" value="TreeGrafter"/>
</dbReference>
<dbReference type="GO" id="GO:0005524">
    <property type="term" value="F:ATP binding"/>
    <property type="evidence" value="ECO:0007669"/>
    <property type="project" value="UniProtKB-UniRule"/>
</dbReference>
<dbReference type="GO" id="GO:0016887">
    <property type="term" value="F:ATP hydrolysis activity"/>
    <property type="evidence" value="ECO:0007669"/>
    <property type="project" value="RHEA"/>
</dbReference>
<dbReference type="GO" id="GO:0003723">
    <property type="term" value="F:RNA binding"/>
    <property type="evidence" value="ECO:0007669"/>
    <property type="project" value="UniProtKB-UniRule"/>
</dbReference>
<dbReference type="GO" id="GO:0003724">
    <property type="term" value="F:RNA helicase activity"/>
    <property type="evidence" value="ECO:0007669"/>
    <property type="project" value="UniProtKB-UniRule"/>
</dbReference>
<dbReference type="GO" id="GO:0006401">
    <property type="term" value="P:RNA catabolic process"/>
    <property type="evidence" value="ECO:0007669"/>
    <property type="project" value="UniProtKB-UniRule"/>
</dbReference>
<dbReference type="CDD" id="cd00268">
    <property type="entry name" value="DEADc"/>
    <property type="match status" value="1"/>
</dbReference>
<dbReference type="CDD" id="cd18787">
    <property type="entry name" value="SF2_C_DEAD"/>
    <property type="match status" value="1"/>
</dbReference>
<dbReference type="FunFam" id="3.40.50.300:FF:000312">
    <property type="entry name" value="ATP-dependent RNA helicase RhlB"/>
    <property type="match status" value="1"/>
</dbReference>
<dbReference type="Gene3D" id="3.40.50.300">
    <property type="entry name" value="P-loop containing nucleotide triphosphate hydrolases"/>
    <property type="match status" value="2"/>
</dbReference>
<dbReference type="HAMAP" id="MF_00661">
    <property type="entry name" value="DEAD_helicase_RhlB"/>
    <property type="match status" value="1"/>
</dbReference>
<dbReference type="InterPro" id="IPR011545">
    <property type="entry name" value="DEAD/DEAH_box_helicase_dom"/>
</dbReference>
<dbReference type="InterPro" id="IPR050079">
    <property type="entry name" value="DEAD_box_RNA_helicase"/>
</dbReference>
<dbReference type="InterPro" id="IPR014001">
    <property type="entry name" value="Helicase_ATP-bd"/>
</dbReference>
<dbReference type="InterPro" id="IPR001650">
    <property type="entry name" value="Helicase_C-like"/>
</dbReference>
<dbReference type="InterPro" id="IPR027417">
    <property type="entry name" value="P-loop_NTPase"/>
</dbReference>
<dbReference type="InterPro" id="IPR000629">
    <property type="entry name" value="RNA-helicase_DEAD-box_CS"/>
</dbReference>
<dbReference type="InterPro" id="IPR023554">
    <property type="entry name" value="RNA_helicase_ATP-dep_RhlB"/>
</dbReference>
<dbReference type="InterPro" id="IPR014014">
    <property type="entry name" value="RNA_helicase_DEAD_Q_motif"/>
</dbReference>
<dbReference type="NCBIfam" id="NF003419">
    <property type="entry name" value="PRK04837.1"/>
    <property type="match status" value="1"/>
</dbReference>
<dbReference type="PANTHER" id="PTHR47959:SF10">
    <property type="entry name" value="ATP-DEPENDENT RNA HELICASE RHLB"/>
    <property type="match status" value="1"/>
</dbReference>
<dbReference type="PANTHER" id="PTHR47959">
    <property type="entry name" value="ATP-DEPENDENT RNA HELICASE RHLE-RELATED"/>
    <property type="match status" value="1"/>
</dbReference>
<dbReference type="Pfam" id="PF00270">
    <property type="entry name" value="DEAD"/>
    <property type="match status" value="1"/>
</dbReference>
<dbReference type="Pfam" id="PF00271">
    <property type="entry name" value="Helicase_C"/>
    <property type="match status" value="1"/>
</dbReference>
<dbReference type="SMART" id="SM00487">
    <property type="entry name" value="DEXDc"/>
    <property type="match status" value="1"/>
</dbReference>
<dbReference type="SMART" id="SM00490">
    <property type="entry name" value="HELICc"/>
    <property type="match status" value="1"/>
</dbReference>
<dbReference type="SUPFAM" id="SSF52540">
    <property type="entry name" value="P-loop containing nucleoside triphosphate hydrolases"/>
    <property type="match status" value="1"/>
</dbReference>
<dbReference type="PROSITE" id="PS00039">
    <property type="entry name" value="DEAD_ATP_HELICASE"/>
    <property type="match status" value="1"/>
</dbReference>
<dbReference type="PROSITE" id="PS51192">
    <property type="entry name" value="HELICASE_ATP_BIND_1"/>
    <property type="match status" value="1"/>
</dbReference>
<dbReference type="PROSITE" id="PS51194">
    <property type="entry name" value="HELICASE_CTER"/>
    <property type="match status" value="1"/>
</dbReference>
<dbReference type="PROSITE" id="PS51195">
    <property type="entry name" value="Q_MOTIF"/>
    <property type="match status" value="1"/>
</dbReference>
<accession>A1SZG4</accession>
<gene>
    <name evidence="1" type="primary">rhlB</name>
    <name type="ordered locus">Ping_3191</name>
</gene>
<sequence length="418" mass="47014">MNKTHLTQTKFADLPLEKSLISGLTSQGYEYCTPIQALSLPITLTGKDIAGQAQTGTGKTLAFLPAVFHHLLTNAQPENRRKNQPRAIILAPTRELAIQIHKDAMVLASMSNLRLGLAYGGEKVEIQRTKLEKGVDILIGTTGRTIDFVKQGVIDMGSIQSVVLDEADRMFDLGFIKDIRYLFRRMPEAKSRLNMLFSATLSHKVQELAFEHMNDPESIQIEPEVMTSVNITEELFYPSNQDKILLLLSLIEEDWPDKAIVFANTKHTCEKVWGYLAGDGLRTGLLTGDVPQNKRLKILQQFTDGEIDILVATDVAARGLHIPKVSHVFNFDLPDDCEDYVHRIGRTGRAGEKGLAISFACEKYVFNLPAIEEYIKHPIPCSEYDKNAMLDSLPVMKVTKYKAHPNSRKDNYHRTHKR</sequence>
<protein>
    <recommendedName>
        <fullName evidence="1">ATP-dependent RNA helicase RhlB</fullName>
        <ecNumber evidence="1">3.6.4.13</ecNumber>
    </recommendedName>
</protein>
<name>RHLB_PSYIN</name>